<feature type="initiator methionine" description="Removed" evidence="5 6">
    <location>
        <position position="1"/>
    </location>
</feature>
<feature type="chain" id="PRO_0000052720" description="Hemoglobin subunit alpha">
    <location>
        <begin position="2"/>
        <end position="142"/>
    </location>
</feature>
<feature type="peptide" id="PRO_0000455920" description="Hemopressin" evidence="2">
    <location>
        <begin position="96"/>
        <end position="104"/>
    </location>
</feature>
<feature type="domain" description="Globin" evidence="4">
    <location>
        <begin position="2"/>
        <end position="142"/>
    </location>
</feature>
<feature type="binding site" evidence="4">
    <location>
        <position position="59"/>
    </location>
    <ligand>
        <name>O2</name>
        <dbReference type="ChEBI" id="CHEBI:15379"/>
    </ligand>
</feature>
<feature type="binding site" description="proximal binding residue" evidence="4">
    <location>
        <position position="88"/>
    </location>
    <ligand>
        <name>heme b</name>
        <dbReference type="ChEBI" id="CHEBI:60344"/>
    </ligand>
    <ligandPart>
        <name>Fe</name>
        <dbReference type="ChEBI" id="CHEBI:18248"/>
    </ligandPart>
</feature>
<feature type="modified residue" description="Phosphoserine" evidence="3">
    <location>
        <position position="4"/>
    </location>
</feature>
<feature type="modified residue" description="N6-succinyllysine" evidence="1">
    <location>
        <position position="8"/>
    </location>
</feature>
<feature type="modified residue" description="Phosphothreonine" evidence="3">
    <location>
        <position position="9"/>
    </location>
</feature>
<feature type="modified residue" description="N6-succinyllysine" evidence="1">
    <location>
        <position position="12"/>
    </location>
</feature>
<feature type="modified residue" description="N6-acetyllysine; alternate" evidence="3">
    <location>
        <position position="17"/>
    </location>
</feature>
<feature type="modified residue" description="N6-succinyllysine; alternate" evidence="1">
    <location>
        <position position="17"/>
    </location>
</feature>
<feature type="modified residue" description="Phosphotyrosine" evidence="3">
    <location>
        <position position="25"/>
    </location>
</feature>
<feature type="modified residue" description="Phosphoserine" evidence="3">
    <location>
        <position position="36"/>
    </location>
</feature>
<feature type="modified residue" description="N6-succinyllysine" evidence="1">
    <location>
        <position position="41"/>
    </location>
</feature>
<feature type="modified residue" description="Phosphoserine" evidence="3">
    <location>
        <position position="50"/>
    </location>
</feature>
<feature type="modified residue" description="Phosphoserine" evidence="1">
    <location>
        <position position="103"/>
    </location>
</feature>
<feature type="modified residue" description="Phosphothreonine" evidence="1">
    <location>
        <position position="109"/>
    </location>
</feature>
<feature type="modified residue" description="Phosphoserine" evidence="1">
    <location>
        <position position="125"/>
    </location>
</feature>
<feature type="modified residue" description="Phosphoserine" evidence="1">
    <location>
        <position position="132"/>
    </location>
</feature>
<feature type="modified residue" description="Phosphothreonine" evidence="1">
    <location>
        <position position="135"/>
    </location>
</feature>
<feature type="modified residue" description="Phosphothreonine" evidence="1">
    <location>
        <position position="138"/>
    </location>
</feature>
<feature type="modified residue" description="Phosphoserine" evidence="1">
    <location>
        <position position="139"/>
    </location>
</feature>
<protein>
    <recommendedName>
        <fullName>Hemoglobin subunit alpha</fullName>
    </recommendedName>
    <alternativeName>
        <fullName>Alpha-globin</fullName>
    </alternativeName>
    <alternativeName>
        <fullName>Hemoglobin alpha chain</fullName>
    </alternativeName>
    <component>
        <recommendedName>
            <fullName evidence="2">Hemopressin</fullName>
        </recommendedName>
    </component>
</protein>
<reference key="1">
    <citation type="journal article" date="1983" name="Nucleic Acids Res.">
        <title>Structural and evolutionary analysis of the two chimpanzee alpha-globin mRNAs.</title>
        <authorList>
            <person name="Liebhaber S.A."/>
            <person name="Begley K.A."/>
        </authorList>
    </citation>
    <scope>NUCLEOTIDE SEQUENCE [MRNA]</scope>
</reference>
<reference key="2">
    <citation type="journal article" date="1965" name="Biochim. Biophys. Acta">
        <title>The characterization of the tryptic peptides from the hemoglobin of the chimpanzee (Pan troglodytes).</title>
        <authorList>
            <person name="Rifkin D.B."/>
            <person name="Konigsberg W."/>
        </authorList>
    </citation>
    <scope>PROTEIN SEQUENCE OF 2-142</scope>
</reference>
<reference key="3">
    <citation type="journal article" date="1983" name="Nature">
        <title>Evidence on human origins from haemoglobins of African apes.</title>
        <authorList>
            <person name="Goodman M."/>
            <person name="Braunitzer G."/>
            <person name="Stangl A."/>
            <person name="Schrank B."/>
        </authorList>
    </citation>
    <scope>PROTEIN SEQUENCE OF 2-142</scope>
</reference>
<comment type="function">
    <text>Involved in oxygen transport from the lung to the various peripheral tissues.</text>
</comment>
<comment type="function">
    <molecule>Hemopressin</molecule>
    <text evidence="2">Hemopressin acts as an antagonist peptide of the cannabinoid receptor CNR1. Hemopressin-binding efficiently blocks cannabinoid receptor CNR1 and subsequent signaling.</text>
</comment>
<comment type="subunit">
    <text>Heterotetramer of two alpha chains and two beta chains in adult hemoglobin A (HbA); two alpha chains and two delta chains in adult hemoglobin A2 (HbA2); two alpha chains and two epsilon chains in early embryonic hemoglobin Gower-2; two alpha chains and two gamma chains in fetal hemoglobin F (HbF).</text>
</comment>
<comment type="tissue specificity">
    <text>Red blood cells.</text>
</comment>
<comment type="miscellaneous">
    <text>Gives blood its red color.</text>
</comment>
<comment type="similarity">
    <text evidence="4">Belongs to the globin family.</text>
</comment>
<evidence type="ECO:0000250" key="1">
    <source>
        <dbReference type="UniProtKB" id="P01942"/>
    </source>
</evidence>
<evidence type="ECO:0000250" key="2">
    <source>
        <dbReference type="UniProtKB" id="P01946"/>
    </source>
</evidence>
<evidence type="ECO:0000250" key="3">
    <source>
        <dbReference type="UniProtKB" id="P69905"/>
    </source>
</evidence>
<evidence type="ECO:0000255" key="4">
    <source>
        <dbReference type="PROSITE-ProRule" id="PRU00238"/>
    </source>
</evidence>
<evidence type="ECO:0000269" key="5">
    <source>
    </source>
</evidence>
<evidence type="ECO:0000269" key="6">
    <source>
    </source>
</evidence>
<gene>
    <name type="primary">HBA1</name>
</gene>
<gene>
    <name type="primary">HBA2</name>
</gene>
<organism>
    <name type="scientific">Pan troglodytes</name>
    <name type="common">Chimpanzee</name>
    <dbReference type="NCBI Taxonomy" id="9598"/>
    <lineage>
        <taxon>Eukaryota</taxon>
        <taxon>Metazoa</taxon>
        <taxon>Chordata</taxon>
        <taxon>Craniata</taxon>
        <taxon>Vertebrata</taxon>
        <taxon>Euteleostomi</taxon>
        <taxon>Mammalia</taxon>
        <taxon>Eutheria</taxon>
        <taxon>Euarchontoglires</taxon>
        <taxon>Primates</taxon>
        <taxon>Haplorrhini</taxon>
        <taxon>Catarrhini</taxon>
        <taxon>Hominidae</taxon>
        <taxon>Pan</taxon>
    </lineage>
</organism>
<accession>P69907</accession>
<accession>P01922</accession>
<name>HBA_PANTR</name>
<dbReference type="EMBL" id="X00226">
    <property type="protein sequence ID" value="CAA25044.1"/>
    <property type="molecule type" value="mRNA"/>
</dbReference>
<dbReference type="EMBL" id="X00227">
    <property type="protein sequence ID" value="CAA25045.1"/>
    <property type="molecule type" value="mRNA"/>
</dbReference>
<dbReference type="PIR" id="I58217">
    <property type="entry name" value="HACZ"/>
</dbReference>
<dbReference type="RefSeq" id="NP_001036091.1">
    <property type="nucleotide sequence ID" value="NM_001042626.1"/>
</dbReference>
<dbReference type="RefSeq" id="NP_001036092.1">
    <property type="nucleotide sequence ID" value="NM_001042627.1"/>
</dbReference>
<dbReference type="SMR" id="P69907"/>
<dbReference type="FunCoup" id="P69907">
    <property type="interactions" value="19"/>
</dbReference>
<dbReference type="STRING" id="9598.ENSPTRP00000067405"/>
<dbReference type="Ensembl" id="ENSPTRT00000107557.1">
    <property type="protein sequence ID" value="ENSPTRP00000067405.1"/>
    <property type="gene ID" value="ENSPTRG00000049822.1"/>
</dbReference>
<dbReference type="GeneID" id="732485"/>
<dbReference type="GeneID" id="732486"/>
<dbReference type="KEGG" id="ptr:732485"/>
<dbReference type="KEGG" id="ptr:732486"/>
<dbReference type="CTD" id="3039"/>
<dbReference type="CTD" id="3040"/>
<dbReference type="GeneTree" id="ENSGT00940000154590"/>
<dbReference type="InParanoid" id="P69907"/>
<dbReference type="OMA" id="MFTSFPT"/>
<dbReference type="OrthoDB" id="8598at9604"/>
<dbReference type="Proteomes" id="UP000002277">
    <property type="component" value="Chromosome 16"/>
</dbReference>
<dbReference type="Bgee" id="ENSPTRG00000049822">
    <property type="expression patterns" value="Expressed in bone marrow and 20 other cell types or tissues"/>
</dbReference>
<dbReference type="GO" id="GO:0005615">
    <property type="term" value="C:extracellular space"/>
    <property type="evidence" value="ECO:0007669"/>
    <property type="project" value="Ensembl"/>
</dbReference>
<dbReference type="GO" id="GO:0031838">
    <property type="term" value="C:haptoglobin-hemoglobin complex"/>
    <property type="evidence" value="ECO:0000318"/>
    <property type="project" value="GO_Central"/>
</dbReference>
<dbReference type="GO" id="GO:0005833">
    <property type="term" value="C:hemoglobin complex"/>
    <property type="evidence" value="ECO:0000318"/>
    <property type="project" value="GO_Central"/>
</dbReference>
<dbReference type="GO" id="GO:0031720">
    <property type="term" value="F:haptoglobin binding"/>
    <property type="evidence" value="ECO:0007669"/>
    <property type="project" value="Ensembl"/>
</dbReference>
<dbReference type="GO" id="GO:0020037">
    <property type="term" value="F:heme binding"/>
    <property type="evidence" value="ECO:0000318"/>
    <property type="project" value="GO_Central"/>
</dbReference>
<dbReference type="GO" id="GO:0005506">
    <property type="term" value="F:iron ion binding"/>
    <property type="evidence" value="ECO:0007669"/>
    <property type="project" value="InterPro"/>
</dbReference>
<dbReference type="GO" id="GO:0019825">
    <property type="term" value="F:oxygen binding"/>
    <property type="evidence" value="ECO:0000318"/>
    <property type="project" value="GO_Central"/>
</dbReference>
<dbReference type="GO" id="GO:0005344">
    <property type="term" value="F:oxygen carrier activity"/>
    <property type="evidence" value="ECO:0000318"/>
    <property type="project" value="GO_Central"/>
</dbReference>
<dbReference type="GO" id="GO:0004601">
    <property type="term" value="F:peroxidase activity"/>
    <property type="evidence" value="ECO:0007669"/>
    <property type="project" value="Ensembl"/>
</dbReference>
<dbReference type="GO" id="GO:0042744">
    <property type="term" value="P:hydrogen peroxide catabolic process"/>
    <property type="evidence" value="ECO:0000318"/>
    <property type="project" value="GO_Central"/>
</dbReference>
<dbReference type="GO" id="GO:0030185">
    <property type="term" value="P:nitric oxide transport"/>
    <property type="evidence" value="ECO:0007669"/>
    <property type="project" value="Ensembl"/>
</dbReference>
<dbReference type="GO" id="GO:0042542">
    <property type="term" value="P:response to hydrogen peroxide"/>
    <property type="evidence" value="ECO:0007669"/>
    <property type="project" value="Ensembl"/>
</dbReference>
<dbReference type="CDD" id="cd08927">
    <property type="entry name" value="Hb-alpha-like"/>
    <property type="match status" value="1"/>
</dbReference>
<dbReference type="FunFam" id="1.10.490.10:FF:000002">
    <property type="entry name" value="Hemoglobin subunit alpha"/>
    <property type="match status" value="1"/>
</dbReference>
<dbReference type="Gene3D" id="1.10.490.10">
    <property type="entry name" value="Globins"/>
    <property type="match status" value="1"/>
</dbReference>
<dbReference type="InterPro" id="IPR000971">
    <property type="entry name" value="Globin"/>
</dbReference>
<dbReference type="InterPro" id="IPR009050">
    <property type="entry name" value="Globin-like_sf"/>
</dbReference>
<dbReference type="InterPro" id="IPR012292">
    <property type="entry name" value="Globin/Proto"/>
</dbReference>
<dbReference type="InterPro" id="IPR002338">
    <property type="entry name" value="Hemoglobin_a-typ"/>
</dbReference>
<dbReference type="InterPro" id="IPR050056">
    <property type="entry name" value="Hemoglobin_oxygen_transport"/>
</dbReference>
<dbReference type="InterPro" id="IPR002339">
    <property type="entry name" value="Hemoglobin_pi"/>
</dbReference>
<dbReference type="PANTHER" id="PTHR11442">
    <property type="entry name" value="HEMOGLOBIN FAMILY MEMBER"/>
    <property type="match status" value="1"/>
</dbReference>
<dbReference type="PANTHER" id="PTHR11442:SF48">
    <property type="entry name" value="HEMOGLOBIN SUBUNIT ALPHA"/>
    <property type="match status" value="1"/>
</dbReference>
<dbReference type="Pfam" id="PF00042">
    <property type="entry name" value="Globin"/>
    <property type="match status" value="1"/>
</dbReference>
<dbReference type="PRINTS" id="PR00612">
    <property type="entry name" value="ALPHAHAEM"/>
</dbReference>
<dbReference type="PRINTS" id="PR00815">
    <property type="entry name" value="PIHAEM"/>
</dbReference>
<dbReference type="SUPFAM" id="SSF46458">
    <property type="entry name" value="Globin-like"/>
    <property type="match status" value="1"/>
</dbReference>
<dbReference type="PROSITE" id="PS01033">
    <property type="entry name" value="GLOBIN"/>
    <property type="match status" value="1"/>
</dbReference>
<keyword id="KW-0007">Acetylation</keyword>
<keyword id="KW-0903">Direct protein sequencing</keyword>
<keyword id="KW-0349">Heme</keyword>
<keyword id="KW-0408">Iron</keyword>
<keyword id="KW-0479">Metal-binding</keyword>
<keyword id="KW-0561">Oxygen transport</keyword>
<keyword id="KW-0597">Phosphoprotein</keyword>
<keyword id="KW-1185">Reference proteome</keyword>
<keyword id="KW-0813">Transport</keyword>
<sequence>MVLSPADKTNVKAAWGKVGAHAGEYGAEALERMFLSFPTTKTYFPHFDLSHGSAQVKGHGKKVADALTNAVAHVDDMPNALSALSDLHAHKLRVDPVNFKLLSHCLLVTLAAHLPAEFTPAVHASLDKFLASVSTVLTSKYR</sequence>
<proteinExistence type="evidence at protein level"/>